<reference evidence="10" key="1">
    <citation type="journal article" date="2003" name="J. Biol. Chem.">
        <title>Purification, kinetic characterization, and molecular cloning of a novel enzyme ecdysteroid-phosphate phosphatase.</title>
        <authorList>
            <person name="Yamada R."/>
            <person name="Sonobe H."/>
        </authorList>
    </citation>
    <scope>NUCLEOTIDE SEQUENCE [MRNA] (ISOFORM 2)</scope>
    <scope>PROTEIN SEQUENCE OF 367-385; 744-763; 461-474; 523-538; 539-563 AND 567-591</scope>
    <scope>FUNCTION</scope>
    <scope>CATALYTIC ACTIVITY</scope>
    <scope>BIOPHYSICOCHEMICAL PROPERTIES</scope>
    <scope>SUBCELLULAR LOCATION</scope>
    <scope>TISSUE SPECIFICITY</scope>
</reference>
<reference evidence="11" key="2">
    <citation type="submission" date="2011-01" db="EMBL/GenBank/DDBJ databases">
        <title>Physiological significance of phosphorylation/dephosphorylation reactions of ecdysteroids in ovary-egg system in insects.</title>
        <authorList>
            <person name="Sonobe H."/>
            <person name="Tenokuchi Y."/>
        </authorList>
    </citation>
    <scope>NUCLEOTIDE SEQUENCE [MRNA] (ISOFORM 1)</scope>
    <source>
        <tissue evidence="11">Egg</tissue>
    </source>
</reference>
<reference key="3">
    <citation type="journal article" date="2005" name="Zool. Sci.">
        <title>Release of ecdysteroid-phosphates from egg yolk granules and their dephosphorylation during early embryonic development in silkworm, Bombyx mori.</title>
        <authorList>
            <person name="Yamada R."/>
            <person name="Yamahama Y."/>
            <person name="Sonobe H."/>
        </authorList>
    </citation>
    <scope>FUNCTION</scope>
    <scope>SUBCELLULAR LOCATION</scope>
</reference>
<reference evidence="12" key="4">
    <citation type="journal article" date="2008" name="Biochemistry">
        <title>Structural and functional characterization of the c-terminal domain of the ecdysteroid phosphate phosphatase from bombyx mori reveals a new enzymatic activity.</title>
        <authorList>
            <person name="Chen Y."/>
            <person name="Jakoncic J."/>
            <person name="Wang J."/>
            <person name="Zheng X."/>
            <person name="Carpino N."/>
            <person name="Nassar N."/>
        </authorList>
    </citation>
    <scope>X-RAY CRYSTALLOGRAPHY (1.76 ANGSTROMS) OF 399-661 IN COMPLEX WITH INHIBITOR TUNGSTATE</scope>
    <scope>FUNCTION</scope>
    <scope>CATALYTIC ACTIVITY</scope>
    <scope>SUBUNIT</scope>
    <scope>ACTIVE SITE</scope>
    <scope>MUTAGENESIS OF HIS-410; LYS-526 AND LYS-622</scope>
</reference>
<name>EPP_BOMMO</name>
<organism evidence="10">
    <name type="scientific">Bombyx mori</name>
    <name type="common">Silk moth</name>
    <dbReference type="NCBI Taxonomy" id="7091"/>
    <lineage>
        <taxon>Eukaryota</taxon>
        <taxon>Metazoa</taxon>
        <taxon>Ecdysozoa</taxon>
        <taxon>Arthropoda</taxon>
        <taxon>Hexapoda</taxon>
        <taxon>Insecta</taxon>
        <taxon>Pterygota</taxon>
        <taxon>Neoptera</taxon>
        <taxon>Endopterygota</taxon>
        <taxon>Lepidoptera</taxon>
        <taxon>Glossata</taxon>
        <taxon>Ditrysia</taxon>
        <taxon>Bombycoidea</taxon>
        <taxon>Bombycidae</taxon>
        <taxon>Bombycinae</taxon>
        <taxon>Bombyx</taxon>
    </lineage>
</organism>
<feature type="chain" id="PRO_0000450519" description="Ecdysteroid-phosphate phosphatase">
    <location>
        <begin position="1"/>
        <end position="661"/>
    </location>
</feature>
<feature type="domain" description="UBA" evidence="2">
    <location>
        <begin position="16"/>
        <end position="57"/>
    </location>
</feature>
<feature type="domain" description="SH3" evidence="1">
    <location>
        <begin position="235"/>
        <end position="300"/>
    </location>
</feature>
<feature type="active site" evidence="9">
    <location>
        <position position="409"/>
    </location>
</feature>
<feature type="active site" description="Tele-phosphohistidine intermediate" evidence="5">
    <location>
        <position position="410"/>
    </location>
</feature>
<feature type="active site" evidence="9">
    <location>
        <position position="590"/>
    </location>
</feature>
<feature type="splice variant" id="VSP_061773" description="In isoform 2." evidence="8">
    <location>
        <begin position="1"/>
        <end position="330"/>
    </location>
</feature>
<feature type="mutagenesis site" description="Abolishes catalytic activity." evidence="5">
    <original>H</original>
    <variation>S</variation>
    <location>
        <position position="410"/>
    </location>
</feature>
<feature type="mutagenesis site" description="Impairs catalytic activity." evidence="5">
    <original>K</original>
    <variation>S</variation>
    <variation>D</variation>
    <location>
        <position position="526"/>
    </location>
</feature>
<feature type="mutagenesis site" description="Impairs catalytic activity." evidence="5">
    <original>K</original>
    <variation>S</variation>
    <location>
        <position position="622"/>
    </location>
</feature>
<feature type="sequence conflict" description="In Ref. 2; BAJ61834." evidence="7" ref="2">
    <original>L</original>
    <variation>P</variation>
    <location>
        <position position="408"/>
    </location>
</feature>
<feature type="sequence conflict" description="In Ref. 2; BAJ61834." evidence="7" ref="2">
    <original>Q</original>
    <variation>L</variation>
    <location>
        <position position="467"/>
    </location>
</feature>
<feature type="sequence conflict" description="In Ref. 2; BAJ61834." evidence="7" ref="2">
    <original>E</original>
    <variation>A</variation>
    <location>
        <position position="552"/>
    </location>
</feature>
<feature type="strand" evidence="13">
    <location>
        <begin position="403"/>
        <end position="409"/>
    </location>
</feature>
<feature type="helix" evidence="13">
    <location>
        <begin position="414"/>
        <end position="417"/>
    </location>
</feature>
<feature type="strand" evidence="13">
    <location>
        <begin position="418"/>
        <end position="420"/>
    </location>
</feature>
<feature type="helix" evidence="13">
    <location>
        <begin position="421"/>
        <end position="425"/>
    </location>
</feature>
<feature type="helix" evidence="13">
    <location>
        <begin position="448"/>
        <end position="454"/>
    </location>
</feature>
<feature type="helix" evidence="13">
    <location>
        <begin position="460"/>
        <end position="475"/>
    </location>
</feature>
<feature type="strand" evidence="13">
    <location>
        <begin position="482"/>
        <end position="485"/>
    </location>
</feature>
<feature type="helix" evidence="13">
    <location>
        <begin position="489"/>
        <end position="502"/>
    </location>
</feature>
<feature type="strand" evidence="13">
    <location>
        <begin position="510"/>
        <end position="512"/>
    </location>
</feature>
<feature type="helix" evidence="13">
    <location>
        <begin position="514"/>
        <end position="516"/>
    </location>
</feature>
<feature type="helix" evidence="13">
    <location>
        <begin position="533"/>
        <end position="538"/>
    </location>
</feature>
<feature type="helix" evidence="13">
    <location>
        <begin position="560"/>
        <end position="577"/>
    </location>
</feature>
<feature type="turn" evidence="13">
    <location>
        <begin position="578"/>
        <end position="582"/>
    </location>
</feature>
<feature type="strand" evidence="13">
    <location>
        <begin position="585"/>
        <end position="589"/>
    </location>
</feature>
<feature type="helix" evidence="13">
    <location>
        <begin position="593"/>
        <end position="602"/>
    </location>
</feature>
<feature type="strand" evidence="13">
    <location>
        <begin position="618"/>
        <end position="621"/>
    </location>
</feature>
<feature type="strand" evidence="13">
    <location>
        <begin position="628"/>
        <end position="633"/>
    </location>
</feature>
<feature type="turn" evidence="13">
    <location>
        <begin position="634"/>
        <end position="636"/>
    </location>
</feature>
<feature type="strand" evidence="13">
    <location>
        <begin position="637"/>
        <end position="639"/>
    </location>
</feature>
<feature type="helix" evidence="13">
    <location>
        <begin position="656"/>
        <end position="659"/>
    </location>
</feature>
<accession>Q7YTB0</accession>
<accession>E7FLK2</accession>
<sequence length="661" mass="74424">MANLPPRKVTSASKSKQDVSPLQILLQMGFRRQRALKALAATGNRSVQLASDWLLTHVSDSNIDADDPREYIFYASPTGPLLSQLLEFWDKSKSTCGWNGAHNFLPHITLVSFFKAPDDTSLNLAKAVRQVVENVGDPPKCTLKLEPYVSHNFMGLFISEEHAEYLKKIAVQYVKQVSSVSSINLEAHVKSLHITLAYHFEESSYEDLKTLVEEMQPVEHSSWELRLYSRDPRFANHQVYKVTQGYSPQASDELELVLGDYIYIEEKEFDISPDGWVHGTSWLTGLNGYLPAVYTRRTAETDAWTLLKAVSLGNNCSDCKSESGSNTDSEMAGTYPHEDAADLAYKKSEETYQEWDKYWSEVMNSRSDSILTITQGLPMNWELSKAAEEMKNNITNGTSKSRRWVFALRHGERVDLTYGPWVPHCFENDTYVRKDLNLPLKLAHRAGGKGGYVKDTPLTRLGWFQAQLVGEGMRMAGVSIKHVYASPALRCVETAQGFLDGLRADPSVKIKVEPGLFEFKNWHMPKGIDFMTPIELCKAGLNVDMTYKPYVEMDASAETMDEFFKRGEVAMQAAVNDTEKDGGNVIFIGHAITLDQMVGALHRLRDDMEDVQPYEIGRNLLKVPYCALGAMRGKPWDVVSPPCPPSINSSSGRFDWRILIK</sequence>
<keyword id="KW-0002">3D-structure</keyword>
<keyword id="KW-0025">Alternative splicing</keyword>
<keyword id="KW-0963">Cytoplasm</keyword>
<keyword id="KW-0903">Direct protein sequencing</keyword>
<keyword id="KW-0378">Hydrolase</keyword>
<keyword id="KW-0904">Protein phosphatase</keyword>
<keyword id="KW-1185">Reference proteome</keyword>
<keyword id="KW-0728">SH3 domain</keyword>
<comment type="function">
    <text evidence="3 4 5">Steroid phosphatase which catalyzes the conversion of inactive phosphorylated ecdysteroids into their active forms (PubMed:12721294, PubMed:15738639, PubMed:18937503). Shows high activity towards ecdysone 22-phosphate (E22P) (PubMed:12721294). Has lower activity towards other ecdysteriod phosphates including 20-hydroxyecdysone 22-phosphate (20E22P) and 2-deoxyecdysone 22-phosphate (2dE22P) (PubMed:12721294). Also has protein tyrosine phosphatase activity (PubMed:18937503).</text>
</comment>
<comment type="catalytic activity">
    <reaction evidence="3">
        <text>ecdysone 22-phosphate + H2O = ecdysone + phosphate</text>
        <dbReference type="Rhea" id="RHEA:63576"/>
        <dbReference type="ChEBI" id="CHEBI:15377"/>
        <dbReference type="ChEBI" id="CHEBI:16688"/>
        <dbReference type="ChEBI" id="CHEBI:43474"/>
        <dbReference type="ChEBI" id="CHEBI:147380"/>
    </reaction>
</comment>
<comment type="catalytic activity">
    <reaction evidence="3">
        <text>20-hydroxyecdysone 22-phosphate + H2O = 20-hydroxyecdysone + phosphate</text>
        <dbReference type="Rhea" id="RHEA:63580"/>
        <dbReference type="ChEBI" id="CHEBI:15377"/>
        <dbReference type="ChEBI" id="CHEBI:16587"/>
        <dbReference type="ChEBI" id="CHEBI:43474"/>
        <dbReference type="ChEBI" id="CHEBI:147382"/>
    </reaction>
</comment>
<comment type="catalytic activity">
    <reaction evidence="3">
        <text>2-deoxyecdysone 22-phosphate + H2O = 2-deoxyecdysone + phosphate</text>
        <dbReference type="Rhea" id="RHEA:63584"/>
        <dbReference type="ChEBI" id="CHEBI:15377"/>
        <dbReference type="ChEBI" id="CHEBI:19566"/>
        <dbReference type="ChEBI" id="CHEBI:43474"/>
        <dbReference type="ChEBI" id="CHEBI:147386"/>
    </reaction>
</comment>
<comment type="catalytic activity">
    <reaction evidence="5">
        <text>O-phospho-L-tyrosyl-[protein] + H2O = L-tyrosyl-[protein] + phosphate</text>
        <dbReference type="Rhea" id="RHEA:10684"/>
        <dbReference type="Rhea" id="RHEA-COMP:10136"/>
        <dbReference type="Rhea" id="RHEA-COMP:20101"/>
        <dbReference type="ChEBI" id="CHEBI:15377"/>
        <dbReference type="ChEBI" id="CHEBI:43474"/>
        <dbReference type="ChEBI" id="CHEBI:46858"/>
        <dbReference type="ChEBI" id="CHEBI:61978"/>
        <dbReference type="EC" id="3.1.3.48"/>
    </reaction>
</comment>
<comment type="activity regulation">
    <text evidence="3 5">Competitively inhibited by 4-nitrophenyl phosphate (para-nitrophenylphosphate, pNPP) (PubMed:12721294). Also inhibited by tungstate, vanadate, and phosphate (PubMed:18937503).</text>
</comment>
<comment type="biophysicochemical properties">
    <kinetics>
        <KM evidence="3">5.88 uM for ecdysone 22-phosphate (E22P)</KM>
        <KM evidence="3">19.23 uM for 20-hydroxyecdysone 22-phosphate (20E22P)</KM>
        <KM evidence="3">14.93 uM for 2-deoxyecdysone 22-phosphate (2dE22P)</KM>
        <KM evidence="3">163.7 uM for 22-deoxy-20-hydroxyecdysone 3-phosphate (22d20E3P)</KM>
        <Vmax evidence="3">1.25 umol/min/mg enzyme towards ecdysone 22-phosphate (E22P)</Vmax>
        <Vmax evidence="3">19.23 umol/min/mg enzyme towards 20-hydroxyecdysone 22-phosphate (20E22P)</Vmax>
        <Vmax evidence="3">4.67 umol/min/mg enzyme towards 2-deoxyecdysone 22-phosphate (2dE22P)</Vmax>
        <Vmax evidence="3">0.19 umol/min/mg enzyme towards 22-deoxy-20-hydroxyecdysone 3-phosphate (22d20E3P)</Vmax>
        <text evidence="3">kcat is 0.94 sec(-1) for E22P. kcat is 14.57 sec(-1) for 20E22P. kcat is 3.53 sec(-1) for 2dE22P. kcat is 0.14 sec(-1) for 22d20E3P.</text>
    </kinetics>
    <phDependence>
        <text evidence="3">Optimum pH is 7.5 with ecdysone 22-phosphate (E22P) as substrate (PubMed:12721294). Not active at pH below 5.0 (PubMed:12721294).</text>
    </phDependence>
</comment>
<comment type="subunit">
    <text evidence="5">Homodimer.</text>
</comment>
<comment type="subcellular location">
    <subcellularLocation>
        <location evidence="3 4">Cytoplasm</location>
        <location evidence="3 4">Cytosol</location>
    </subcellularLocation>
    <text evidence="4">In 72 hr non-diapause eggs, detected mainly in the cystol surrounding the nucleus of yolk cells.</text>
</comment>
<comment type="alternative products">
    <event type="alternative splicing"/>
    <isoform>
        <id>Q7YTB0-3</id>
        <name evidence="7">1</name>
        <sequence type="displayed"/>
    </isoform>
    <isoform>
        <id>Q7YTB0-1</id>
        <name evidence="7">2</name>
        <sequence type="described" ref="VSP_061773"/>
    </isoform>
</comment>
<comment type="tissue specificity">
    <text evidence="3">Detected in non-diapause eggs, with highest expression between 2 and 5 days after oviposition. Not detected in other tissues tested.</text>
</comment>
<gene>
    <name evidence="6" type="primary">EPP</name>
</gene>
<evidence type="ECO:0000255" key="1">
    <source>
        <dbReference type="PROSITE-ProRule" id="PRU00192"/>
    </source>
</evidence>
<evidence type="ECO:0000255" key="2">
    <source>
        <dbReference type="PROSITE-ProRule" id="PRU00212"/>
    </source>
</evidence>
<evidence type="ECO:0000269" key="3">
    <source>
    </source>
</evidence>
<evidence type="ECO:0000269" key="4">
    <source>
    </source>
</evidence>
<evidence type="ECO:0000269" key="5">
    <source>
    </source>
</evidence>
<evidence type="ECO:0000303" key="6">
    <source>
    </source>
</evidence>
<evidence type="ECO:0000305" key="7"/>
<evidence type="ECO:0000305" key="8">
    <source>
    </source>
</evidence>
<evidence type="ECO:0000305" key="9">
    <source>
    </source>
</evidence>
<evidence type="ECO:0000312" key="10">
    <source>
        <dbReference type="EMBL" id="BAC79266.1"/>
    </source>
</evidence>
<evidence type="ECO:0000312" key="11">
    <source>
        <dbReference type="EMBL" id="BAJ61834.1"/>
    </source>
</evidence>
<evidence type="ECO:0007744" key="12">
    <source>
        <dbReference type="PDB" id="3C7T"/>
    </source>
</evidence>
<evidence type="ECO:0007829" key="13">
    <source>
        <dbReference type="PDB" id="3C7T"/>
    </source>
</evidence>
<protein>
    <recommendedName>
        <fullName evidence="6">Ecdysteroid-phosphate phosphatase</fullName>
        <shortName evidence="6">EPPase</shortName>
        <ecNumber evidence="3 5">3.1.3.-</ecNumber>
        <ecNumber evidence="5">3.1.3.48</ecNumber>
    </recommendedName>
</protein>
<proteinExistence type="evidence at protein level"/>
<dbReference type="EC" id="3.1.3.-" evidence="3 5"/>
<dbReference type="EC" id="3.1.3.48" evidence="5"/>
<dbReference type="EMBL" id="AB107356">
    <property type="protein sequence ID" value="BAC79266.1"/>
    <property type="molecule type" value="mRNA"/>
</dbReference>
<dbReference type="EMBL" id="AB609071">
    <property type="protein sequence ID" value="BAJ61834.1"/>
    <property type="molecule type" value="mRNA"/>
</dbReference>
<dbReference type="RefSeq" id="NP_001036900.1">
    <molecule id="Q7YTB0-1"/>
    <property type="nucleotide sequence ID" value="NM_001043435.1"/>
</dbReference>
<dbReference type="PDB" id="3C7T">
    <property type="method" value="X-ray"/>
    <property type="resolution" value="1.76 A"/>
    <property type="chains" value="A/B/C/D=399-661"/>
</dbReference>
<dbReference type="PDBsum" id="3C7T"/>
<dbReference type="SMR" id="Q7YTB0"/>
<dbReference type="EnsemblMetazoa" id="NM_001043435.1">
    <molecule id="Q7YTB0-1"/>
    <property type="protein sequence ID" value="NP_001036900.1"/>
    <property type="gene ID" value="LOC692444"/>
</dbReference>
<dbReference type="GeneID" id="692444"/>
<dbReference type="KEGG" id="bmor:692444"/>
<dbReference type="CTD" id="42840"/>
<dbReference type="InParanoid" id="Q7YTB0"/>
<dbReference type="BioCyc" id="MetaCyc:MONOMER-18151"/>
<dbReference type="SABIO-RK" id="Q7YTB0"/>
<dbReference type="EvolutionaryTrace" id="Q7YTB0"/>
<dbReference type="Proteomes" id="UP000005204">
    <property type="component" value="Unassembled WGS sequence"/>
</dbReference>
<dbReference type="GO" id="GO:0005829">
    <property type="term" value="C:cytosol"/>
    <property type="evidence" value="ECO:0007669"/>
    <property type="project" value="UniProtKB-SubCell"/>
</dbReference>
<dbReference type="GO" id="GO:0102531">
    <property type="term" value="F:ecdysteroid-phosphate phosphatase activity"/>
    <property type="evidence" value="ECO:0000314"/>
    <property type="project" value="UniProtKB"/>
</dbReference>
<dbReference type="GO" id="GO:0042803">
    <property type="term" value="F:protein homodimerization activity"/>
    <property type="evidence" value="ECO:0000353"/>
    <property type="project" value="UniProtKB"/>
</dbReference>
<dbReference type="GO" id="GO:0004725">
    <property type="term" value="F:protein tyrosine phosphatase activity"/>
    <property type="evidence" value="ECO:0000314"/>
    <property type="project" value="UniProtKB"/>
</dbReference>
<dbReference type="CDD" id="cd07067">
    <property type="entry name" value="HP_PGM_like"/>
    <property type="match status" value="1"/>
</dbReference>
<dbReference type="CDD" id="cd11791">
    <property type="entry name" value="SH3_UBASH3"/>
    <property type="match status" value="1"/>
</dbReference>
<dbReference type="CDD" id="cd14301">
    <property type="entry name" value="UBA_UBS3B"/>
    <property type="match status" value="1"/>
</dbReference>
<dbReference type="FunFam" id="1.10.8.10:FF:000053">
    <property type="entry name" value="Ubiquitin-associated and SH3 domain-containing, A"/>
    <property type="match status" value="1"/>
</dbReference>
<dbReference type="Gene3D" id="3.90.1140.10">
    <property type="entry name" value="Cyclic phosphodiesterase"/>
    <property type="match status" value="1"/>
</dbReference>
<dbReference type="Gene3D" id="1.10.8.10">
    <property type="entry name" value="DNA helicase RuvA subunit, C-terminal domain"/>
    <property type="match status" value="1"/>
</dbReference>
<dbReference type="Gene3D" id="3.40.50.1240">
    <property type="entry name" value="Phosphoglycerate mutase-like"/>
    <property type="match status" value="1"/>
</dbReference>
<dbReference type="Gene3D" id="2.30.30.40">
    <property type="entry name" value="SH3 Domains"/>
    <property type="match status" value="1"/>
</dbReference>
<dbReference type="InterPro" id="IPR013078">
    <property type="entry name" value="His_Pase_superF_clade-1"/>
</dbReference>
<dbReference type="InterPro" id="IPR029033">
    <property type="entry name" value="His_PPase_superfam"/>
</dbReference>
<dbReference type="InterPro" id="IPR051710">
    <property type="entry name" value="Phosphatase_SH3-domain"/>
</dbReference>
<dbReference type="InterPro" id="IPR036028">
    <property type="entry name" value="SH3-like_dom_sf"/>
</dbReference>
<dbReference type="InterPro" id="IPR001452">
    <property type="entry name" value="SH3_domain"/>
</dbReference>
<dbReference type="InterPro" id="IPR015940">
    <property type="entry name" value="UBA"/>
</dbReference>
<dbReference type="InterPro" id="IPR009060">
    <property type="entry name" value="UBA-like_sf"/>
</dbReference>
<dbReference type="PANTHER" id="PTHR16469">
    <property type="entry name" value="UBIQUITIN-ASSOCIATED AND SH3 DOMAIN-CONTAINING BA-RELATED"/>
    <property type="match status" value="1"/>
</dbReference>
<dbReference type="PANTHER" id="PTHR16469:SF27">
    <property type="entry name" value="UBIQUITIN-ASSOCIATED AND SH3 DOMAIN-CONTAINING BA-RELATED"/>
    <property type="match status" value="1"/>
</dbReference>
<dbReference type="Pfam" id="PF00300">
    <property type="entry name" value="His_Phos_1"/>
    <property type="match status" value="1"/>
</dbReference>
<dbReference type="Pfam" id="PF14604">
    <property type="entry name" value="SH3_9"/>
    <property type="match status" value="1"/>
</dbReference>
<dbReference type="Pfam" id="PF22562">
    <property type="entry name" value="UBA_7"/>
    <property type="match status" value="1"/>
</dbReference>
<dbReference type="SMART" id="SM00165">
    <property type="entry name" value="UBA"/>
    <property type="match status" value="1"/>
</dbReference>
<dbReference type="SUPFAM" id="SSF53254">
    <property type="entry name" value="Phosphoglycerate mutase-like"/>
    <property type="match status" value="1"/>
</dbReference>
<dbReference type="SUPFAM" id="SSF50044">
    <property type="entry name" value="SH3-domain"/>
    <property type="match status" value="1"/>
</dbReference>
<dbReference type="SUPFAM" id="SSF46934">
    <property type="entry name" value="UBA-like"/>
    <property type="match status" value="1"/>
</dbReference>
<dbReference type="PROSITE" id="PS50002">
    <property type="entry name" value="SH3"/>
    <property type="match status" value="1"/>
</dbReference>
<dbReference type="PROSITE" id="PS50030">
    <property type="entry name" value="UBA"/>
    <property type="match status" value="1"/>
</dbReference>